<reference key="1">
    <citation type="journal article" date="2003" name="Nature">
        <title>Unique physiological and pathogenic features of Leptospira interrogans revealed by whole-genome sequencing.</title>
        <authorList>
            <person name="Ren S.-X."/>
            <person name="Fu G."/>
            <person name="Jiang X.-G."/>
            <person name="Zeng R."/>
            <person name="Miao Y.-G."/>
            <person name="Xu H."/>
            <person name="Zhang Y.-X."/>
            <person name="Xiong H."/>
            <person name="Lu G."/>
            <person name="Lu L.-F."/>
            <person name="Jiang H.-Q."/>
            <person name="Jia J."/>
            <person name="Tu Y.-F."/>
            <person name="Jiang J.-X."/>
            <person name="Gu W.-Y."/>
            <person name="Zhang Y.-Q."/>
            <person name="Cai Z."/>
            <person name="Sheng H.-H."/>
            <person name="Yin H.-F."/>
            <person name="Zhang Y."/>
            <person name="Zhu G.-F."/>
            <person name="Wan M."/>
            <person name="Huang H.-L."/>
            <person name="Qian Z."/>
            <person name="Wang S.-Y."/>
            <person name="Ma W."/>
            <person name="Yao Z.-J."/>
            <person name="Shen Y."/>
            <person name="Qiang B.-Q."/>
            <person name="Xia Q.-C."/>
            <person name="Guo X.-K."/>
            <person name="Danchin A."/>
            <person name="Saint Girons I."/>
            <person name="Somerville R.L."/>
            <person name="Wen Y.-M."/>
            <person name="Shi M.-H."/>
            <person name="Chen Z."/>
            <person name="Xu J.-G."/>
            <person name="Zhao G.-P."/>
        </authorList>
    </citation>
    <scope>NUCLEOTIDE SEQUENCE [LARGE SCALE GENOMIC DNA]</scope>
    <source>
        <strain>56601</strain>
    </source>
</reference>
<proteinExistence type="inferred from homology"/>
<sequence length="186" mass="20578">MGLSDLSKTPGQALGDMVQLGNVESVIQWGRSYSLWPYPFATACCGIEYMSTACSDYDIARFGAERPSFSPRQADMILVLGTITYKMAPVLRQIYDQMAEPKFVISVGACASSGGMFHTYGVLQGVDRILPVDVYVPGCPPRPEAILDALLKLQTKLKTQGLEARRQEVMQKIQELNERNKPLVVR</sequence>
<feature type="chain" id="PRO_0000376263" description="NADH-quinone oxidoreductase subunit B">
    <location>
        <begin position="1"/>
        <end position="186"/>
    </location>
</feature>
<feature type="binding site" evidence="1">
    <location>
        <position position="44"/>
    </location>
    <ligand>
        <name>[4Fe-4S] cluster</name>
        <dbReference type="ChEBI" id="CHEBI:49883"/>
    </ligand>
</feature>
<feature type="binding site" evidence="1">
    <location>
        <position position="45"/>
    </location>
    <ligand>
        <name>[4Fe-4S] cluster</name>
        <dbReference type="ChEBI" id="CHEBI:49883"/>
    </ligand>
</feature>
<feature type="binding site" evidence="1">
    <location>
        <position position="110"/>
    </location>
    <ligand>
        <name>[4Fe-4S] cluster</name>
        <dbReference type="ChEBI" id="CHEBI:49883"/>
    </ligand>
</feature>
<feature type="binding site" evidence="1">
    <location>
        <position position="139"/>
    </location>
    <ligand>
        <name>[4Fe-4S] cluster</name>
        <dbReference type="ChEBI" id="CHEBI:49883"/>
    </ligand>
</feature>
<keyword id="KW-0004">4Fe-4S</keyword>
<keyword id="KW-0997">Cell inner membrane</keyword>
<keyword id="KW-1003">Cell membrane</keyword>
<keyword id="KW-0408">Iron</keyword>
<keyword id="KW-0411">Iron-sulfur</keyword>
<keyword id="KW-0472">Membrane</keyword>
<keyword id="KW-0479">Metal-binding</keyword>
<keyword id="KW-0520">NAD</keyword>
<keyword id="KW-0874">Quinone</keyword>
<keyword id="KW-1185">Reference proteome</keyword>
<keyword id="KW-1278">Translocase</keyword>
<keyword id="KW-0813">Transport</keyword>
<keyword id="KW-0830">Ubiquinone</keyword>
<name>NUOB_LEPIN</name>
<protein>
    <recommendedName>
        <fullName evidence="1">NADH-quinone oxidoreductase subunit B</fullName>
        <ecNumber evidence="1">7.1.1.-</ecNumber>
    </recommendedName>
    <alternativeName>
        <fullName evidence="1">NADH dehydrogenase I subunit B</fullName>
    </alternativeName>
    <alternativeName>
        <fullName evidence="1">NDH-1 subunit B</fullName>
    </alternativeName>
</protein>
<dbReference type="EC" id="7.1.1.-" evidence="1"/>
<dbReference type="EMBL" id="AE010300">
    <property type="protein sequence ID" value="AAN48093.1"/>
    <property type="molecule type" value="Genomic_DNA"/>
</dbReference>
<dbReference type="RefSeq" id="NP_711075.1">
    <property type="nucleotide sequence ID" value="NC_004342.2"/>
</dbReference>
<dbReference type="RefSeq" id="WP_000524416.1">
    <property type="nucleotide sequence ID" value="NC_004342.2"/>
</dbReference>
<dbReference type="SMR" id="Q8F7Q0"/>
<dbReference type="FunCoup" id="Q8F7Q0">
    <property type="interactions" value="321"/>
</dbReference>
<dbReference type="STRING" id="189518.LA_0894"/>
<dbReference type="PaxDb" id="189518-LA_0894"/>
<dbReference type="EnsemblBacteria" id="AAN48093">
    <property type="protein sequence ID" value="AAN48093"/>
    <property type="gene ID" value="LA_0894"/>
</dbReference>
<dbReference type="KEGG" id="lil:LA_0894"/>
<dbReference type="PATRIC" id="fig|189518.3.peg.896"/>
<dbReference type="HOGENOM" id="CLU_055737_7_3_12"/>
<dbReference type="InParanoid" id="Q8F7Q0"/>
<dbReference type="OrthoDB" id="9786737at2"/>
<dbReference type="PRO" id="PR:Q8F7Q0"/>
<dbReference type="Proteomes" id="UP000001408">
    <property type="component" value="Chromosome I"/>
</dbReference>
<dbReference type="GO" id="GO:0005886">
    <property type="term" value="C:plasma membrane"/>
    <property type="evidence" value="ECO:0007669"/>
    <property type="project" value="UniProtKB-SubCell"/>
</dbReference>
<dbReference type="GO" id="GO:0045271">
    <property type="term" value="C:respiratory chain complex I"/>
    <property type="evidence" value="ECO:0000318"/>
    <property type="project" value="GO_Central"/>
</dbReference>
<dbReference type="GO" id="GO:0051539">
    <property type="term" value="F:4 iron, 4 sulfur cluster binding"/>
    <property type="evidence" value="ECO:0007669"/>
    <property type="project" value="UniProtKB-KW"/>
</dbReference>
<dbReference type="GO" id="GO:0005506">
    <property type="term" value="F:iron ion binding"/>
    <property type="evidence" value="ECO:0007669"/>
    <property type="project" value="UniProtKB-UniRule"/>
</dbReference>
<dbReference type="GO" id="GO:0008137">
    <property type="term" value="F:NADH dehydrogenase (ubiquinone) activity"/>
    <property type="evidence" value="ECO:0000318"/>
    <property type="project" value="GO_Central"/>
</dbReference>
<dbReference type="GO" id="GO:0050136">
    <property type="term" value="F:NADH:ubiquinone reductase (non-electrogenic) activity"/>
    <property type="evidence" value="ECO:0007669"/>
    <property type="project" value="UniProtKB-UniRule"/>
</dbReference>
<dbReference type="GO" id="GO:0048038">
    <property type="term" value="F:quinone binding"/>
    <property type="evidence" value="ECO:0007669"/>
    <property type="project" value="UniProtKB-KW"/>
</dbReference>
<dbReference type="GO" id="GO:0009060">
    <property type="term" value="P:aerobic respiration"/>
    <property type="evidence" value="ECO:0000318"/>
    <property type="project" value="GO_Central"/>
</dbReference>
<dbReference type="GO" id="GO:0015990">
    <property type="term" value="P:electron transport coupled proton transport"/>
    <property type="evidence" value="ECO:0000318"/>
    <property type="project" value="GO_Central"/>
</dbReference>
<dbReference type="FunFam" id="3.40.50.12280:FF:000002">
    <property type="entry name" value="NADH-quinone oxidoreductase subunit B"/>
    <property type="match status" value="1"/>
</dbReference>
<dbReference type="Gene3D" id="3.40.50.12280">
    <property type="match status" value="1"/>
</dbReference>
<dbReference type="HAMAP" id="MF_01356">
    <property type="entry name" value="NDH1_NuoB"/>
    <property type="match status" value="1"/>
</dbReference>
<dbReference type="InterPro" id="IPR006137">
    <property type="entry name" value="NADH_UbQ_OxRdtase-like_20kDa"/>
</dbReference>
<dbReference type="InterPro" id="IPR006138">
    <property type="entry name" value="NADH_UQ_OxRdtase_20Kd_su"/>
</dbReference>
<dbReference type="NCBIfam" id="TIGR01957">
    <property type="entry name" value="nuoB_fam"/>
    <property type="match status" value="1"/>
</dbReference>
<dbReference type="NCBIfam" id="NF005012">
    <property type="entry name" value="PRK06411.1"/>
    <property type="match status" value="1"/>
</dbReference>
<dbReference type="NCBIfam" id="NF011389">
    <property type="entry name" value="PRK14814.1"/>
    <property type="match status" value="1"/>
</dbReference>
<dbReference type="PANTHER" id="PTHR11995">
    <property type="entry name" value="NADH DEHYDROGENASE"/>
    <property type="match status" value="1"/>
</dbReference>
<dbReference type="PANTHER" id="PTHR11995:SF14">
    <property type="entry name" value="NADH DEHYDROGENASE [UBIQUINONE] IRON-SULFUR PROTEIN 7, MITOCHONDRIAL"/>
    <property type="match status" value="1"/>
</dbReference>
<dbReference type="Pfam" id="PF01058">
    <property type="entry name" value="Oxidored_q6"/>
    <property type="match status" value="1"/>
</dbReference>
<dbReference type="SUPFAM" id="SSF56770">
    <property type="entry name" value="HydA/Nqo6-like"/>
    <property type="match status" value="1"/>
</dbReference>
<dbReference type="PROSITE" id="PS01150">
    <property type="entry name" value="COMPLEX1_20K"/>
    <property type="match status" value="1"/>
</dbReference>
<organism>
    <name type="scientific">Leptospira interrogans serogroup Icterohaemorrhagiae serovar Lai (strain 56601)</name>
    <dbReference type="NCBI Taxonomy" id="189518"/>
    <lineage>
        <taxon>Bacteria</taxon>
        <taxon>Pseudomonadati</taxon>
        <taxon>Spirochaetota</taxon>
        <taxon>Spirochaetia</taxon>
        <taxon>Leptospirales</taxon>
        <taxon>Leptospiraceae</taxon>
        <taxon>Leptospira</taxon>
    </lineage>
</organism>
<gene>
    <name evidence="1" type="primary">nuoB</name>
    <name type="ordered locus">LA_0894</name>
</gene>
<evidence type="ECO:0000255" key="1">
    <source>
        <dbReference type="HAMAP-Rule" id="MF_01356"/>
    </source>
</evidence>
<accession>Q8F7Q0</accession>
<comment type="function">
    <text evidence="1">NDH-1 shuttles electrons from NADH, via FMN and iron-sulfur (Fe-S) centers, to quinones in the respiratory chain. The immediate electron acceptor for the enzyme in this species is believed to be ubiquinone. Couples the redox reaction to proton translocation (for every two electrons transferred, four hydrogen ions are translocated across the cytoplasmic membrane), and thus conserves the redox energy in a proton gradient.</text>
</comment>
<comment type="catalytic activity">
    <reaction evidence="1">
        <text>a quinone + NADH + 5 H(+)(in) = a quinol + NAD(+) + 4 H(+)(out)</text>
        <dbReference type="Rhea" id="RHEA:57888"/>
        <dbReference type="ChEBI" id="CHEBI:15378"/>
        <dbReference type="ChEBI" id="CHEBI:24646"/>
        <dbReference type="ChEBI" id="CHEBI:57540"/>
        <dbReference type="ChEBI" id="CHEBI:57945"/>
        <dbReference type="ChEBI" id="CHEBI:132124"/>
    </reaction>
</comment>
<comment type="cofactor">
    <cofactor evidence="1">
        <name>[4Fe-4S] cluster</name>
        <dbReference type="ChEBI" id="CHEBI:49883"/>
    </cofactor>
    <text evidence="1">Binds 1 [4Fe-4S] cluster.</text>
</comment>
<comment type="subunit">
    <text evidence="1">NDH-1 is composed of 14 different subunits. Subunits NuoB, C, D, E, F, and G constitute the peripheral sector of the complex.</text>
</comment>
<comment type="subcellular location">
    <subcellularLocation>
        <location evidence="1">Cell inner membrane</location>
        <topology evidence="1">Peripheral membrane protein</topology>
        <orientation evidence="1">Cytoplasmic side</orientation>
    </subcellularLocation>
</comment>
<comment type="similarity">
    <text evidence="1">Belongs to the complex I 20 kDa subunit family.</text>
</comment>